<gene>
    <name evidence="1" type="primary">rpsC</name>
    <name type="ordered locus">M28_Spy0049</name>
</gene>
<dbReference type="EMBL" id="CP000056">
    <property type="protein sequence ID" value="AAX71163.1"/>
    <property type="molecule type" value="Genomic_DNA"/>
</dbReference>
<dbReference type="RefSeq" id="WP_000529929.1">
    <property type="nucleotide sequence ID" value="NC_007296.2"/>
</dbReference>
<dbReference type="SMR" id="Q48VU3"/>
<dbReference type="GeneID" id="69900032"/>
<dbReference type="KEGG" id="spb:M28_Spy0049"/>
<dbReference type="HOGENOM" id="CLU_058591_0_2_9"/>
<dbReference type="GO" id="GO:0022627">
    <property type="term" value="C:cytosolic small ribosomal subunit"/>
    <property type="evidence" value="ECO:0007669"/>
    <property type="project" value="TreeGrafter"/>
</dbReference>
<dbReference type="GO" id="GO:0003729">
    <property type="term" value="F:mRNA binding"/>
    <property type="evidence" value="ECO:0007669"/>
    <property type="project" value="UniProtKB-UniRule"/>
</dbReference>
<dbReference type="GO" id="GO:0019843">
    <property type="term" value="F:rRNA binding"/>
    <property type="evidence" value="ECO:0007669"/>
    <property type="project" value="UniProtKB-UniRule"/>
</dbReference>
<dbReference type="GO" id="GO:0003735">
    <property type="term" value="F:structural constituent of ribosome"/>
    <property type="evidence" value="ECO:0007669"/>
    <property type="project" value="InterPro"/>
</dbReference>
<dbReference type="GO" id="GO:0006412">
    <property type="term" value="P:translation"/>
    <property type="evidence" value="ECO:0007669"/>
    <property type="project" value="UniProtKB-UniRule"/>
</dbReference>
<dbReference type="CDD" id="cd02412">
    <property type="entry name" value="KH-II_30S_S3"/>
    <property type="match status" value="1"/>
</dbReference>
<dbReference type="FunFam" id="3.30.1140.32:FF:000001">
    <property type="entry name" value="30S ribosomal protein S3"/>
    <property type="match status" value="1"/>
</dbReference>
<dbReference type="FunFam" id="3.30.300.20:FF:000001">
    <property type="entry name" value="30S ribosomal protein S3"/>
    <property type="match status" value="1"/>
</dbReference>
<dbReference type="Gene3D" id="3.30.300.20">
    <property type="match status" value="1"/>
</dbReference>
<dbReference type="Gene3D" id="3.30.1140.32">
    <property type="entry name" value="Ribosomal protein S3, C-terminal domain"/>
    <property type="match status" value="1"/>
</dbReference>
<dbReference type="HAMAP" id="MF_01309_B">
    <property type="entry name" value="Ribosomal_uS3_B"/>
    <property type="match status" value="1"/>
</dbReference>
<dbReference type="InterPro" id="IPR004087">
    <property type="entry name" value="KH_dom"/>
</dbReference>
<dbReference type="InterPro" id="IPR015946">
    <property type="entry name" value="KH_dom-like_a/b"/>
</dbReference>
<dbReference type="InterPro" id="IPR004044">
    <property type="entry name" value="KH_dom_type_2"/>
</dbReference>
<dbReference type="InterPro" id="IPR009019">
    <property type="entry name" value="KH_sf_prok-type"/>
</dbReference>
<dbReference type="InterPro" id="IPR036419">
    <property type="entry name" value="Ribosomal_S3_C_sf"/>
</dbReference>
<dbReference type="InterPro" id="IPR005704">
    <property type="entry name" value="Ribosomal_uS3_bac-typ"/>
</dbReference>
<dbReference type="InterPro" id="IPR001351">
    <property type="entry name" value="Ribosomal_uS3_C"/>
</dbReference>
<dbReference type="InterPro" id="IPR018280">
    <property type="entry name" value="Ribosomal_uS3_CS"/>
</dbReference>
<dbReference type="NCBIfam" id="TIGR01009">
    <property type="entry name" value="rpsC_bact"/>
    <property type="match status" value="1"/>
</dbReference>
<dbReference type="PANTHER" id="PTHR11760">
    <property type="entry name" value="30S/40S RIBOSOMAL PROTEIN S3"/>
    <property type="match status" value="1"/>
</dbReference>
<dbReference type="PANTHER" id="PTHR11760:SF19">
    <property type="entry name" value="SMALL RIBOSOMAL SUBUNIT PROTEIN US3C"/>
    <property type="match status" value="1"/>
</dbReference>
<dbReference type="Pfam" id="PF07650">
    <property type="entry name" value="KH_2"/>
    <property type="match status" value="1"/>
</dbReference>
<dbReference type="Pfam" id="PF00189">
    <property type="entry name" value="Ribosomal_S3_C"/>
    <property type="match status" value="1"/>
</dbReference>
<dbReference type="SMART" id="SM00322">
    <property type="entry name" value="KH"/>
    <property type="match status" value="1"/>
</dbReference>
<dbReference type="SUPFAM" id="SSF54814">
    <property type="entry name" value="Prokaryotic type KH domain (KH-domain type II)"/>
    <property type="match status" value="1"/>
</dbReference>
<dbReference type="SUPFAM" id="SSF54821">
    <property type="entry name" value="Ribosomal protein S3 C-terminal domain"/>
    <property type="match status" value="1"/>
</dbReference>
<dbReference type="PROSITE" id="PS50823">
    <property type="entry name" value="KH_TYPE_2"/>
    <property type="match status" value="1"/>
</dbReference>
<dbReference type="PROSITE" id="PS00548">
    <property type="entry name" value="RIBOSOMAL_S3"/>
    <property type="match status" value="1"/>
</dbReference>
<accession>Q48VU3</accession>
<proteinExistence type="inferred from homology"/>
<comment type="function">
    <text evidence="1">Binds the lower part of the 30S subunit head. Binds mRNA in the 70S ribosome, positioning it for translation.</text>
</comment>
<comment type="subunit">
    <text evidence="1">Part of the 30S ribosomal subunit. Forms a tight complex with proteins S10 and S14.</text>
</comment>
<comment type="similarity">
    <text evidence="1">Belongs to the universal ribosomal protein uS3 family.</text>
</comment>
<sequence>MGQKVHPIGMRVGIIRDWDAKWYAEKEYADYLHEDLAIRKFINKELADASVSTIEIERAVNKVIVSLHTAKPGMVIGKGGANVDALRGQLNKLTGKQVHINIIEIKQPDLDAHLVGENIARQLEQRVAFRRAQKQAIQRTMRAGAKGIKTQVSGRLNGADIARAEGYSEGTVPLHTLRADIDYAWEEADTTYGKLGVKVWIYRGEVLPARKNTKGGK</sequence>
<protein>
    <recommendedName>
        <fullName evidence="1">Small ribosomal subunit protein uS3</fullName>
    </recommendedName>
    <alternativeName>
        <fullName evidence="2">30S ribosomal protein S3</fullName>
    </alternativeName>
</protein>
<organism>
    <name type="scientific">Streptococcus pyogenes serotype M28 (strain MGAS6180)</name>
    <dbReference type="NCBI Taxonomy" id="319701"/>
    <lineage>
        <taxon>Bacteria</taxon>
        <taxon>Bacillati</taxon>
        <taxon>Bacillota</taxon>
        <taxon>Bacilli</taxon>
        <taxon>Lactobacillales</taxon>
        <taxon>Streptococcaceae</taxon>
        <taxon>Streptococcus</taxon>
    </lineage>
</organism>
<evidence type="ECO:0000255" key="1">
    <source>
        <dbReference type="HAMAP-Rule" id="MF_01309"/>
    </source>
</evidence>
<evidence type="ECO:0000305" key="2"/>
<feature type="chain" id="PRO_0000230733" description="Small ribosomal subunit protein uS3">
    <location>
        <begin position="1"/>
        <end position="217"/>
    </location>
</feature>
<feature type="domain" description="KH type-2" evidence="1">
    <location>
        <begin position="38"/>
        <end position="106"/>
    </location>
</feature>
<name>RS3_STRPM</name>
<keyword id="KW-0687">Ribonucleoprotein</keyword>
<keyword id="KW-0689">Ribosomal protein</keyword>
<keyword id="KW-0694">RNA-binding</keyword>
<keyword id="KW-0699">rRNA-binding</keyword>
<reference key="1">
    <citation type="journal article" date="2005" name="J. Infect. Dis.">
        <title>Genome sequence of a serotype M28 strain of group A Streptococcus: potential new insights into puerperal sepsis and bacterial disease specificity.</title>
        <authorList>
            <person name="Green N.M."/>
            <person name="Zhang S."/>
            <person name="Porcella S.F."/>
            <person name="Nagiec M.J."/>
            <person name="Barbian K.D."/>
            <person name="Beres S.B."/>
            <person name="Lefebvre R.B."/>
            <person name="Musser J.M."/>
        </authorList>
    </citation>
    <scope>NUCLEOTIDE SEQUENCE [LARGE SCALE GENOMIC DNA]</scope>
    <source>
        <strain>MGAS6180</strain>
    </source>
</reference>